<protein>
    <recommendedName>
        <fullName>Putative uroporphyrinogen-III synthase</fullName>
        <shortName>UROS</shortName>
        <ecNumber>4.2.1.75</ecNumber>
    </recommendedName>
    <alternativeName>
        <fullName>Hydroxymethylbilane hydrolyase [cyclizing]</fullName>
    </alternativeName>
    <alternativeName>
        <fullName>Uroporphyrinogen-III cosynthase</fullName>
    </alternativeName>
</protein>
<reference key="1">
    <citation type="journal article" date="1997" name="Nature">
        <title>The complete genome sequence of the hyperthermophilic, sulphate-reducing archaeon Archaeoglobus fulgidus.</title>
        <authorList>
            <person name="Klenk H.-P."/>
            <person name="Clayton R.A."/>
            <person name="Tomb J.-F."/>
            <person name="White O."/>
            <person name="Nelson K.E."/>
            <person name="Ketchum K.A."/>
            <person name="Dodson R.J."/>
            <person name="Gwinn M.L."/>
            <person name="Hickey E.K."/>
            <person name="Peterson J.D."/>
            <person name="Richardson D.L."/>
            <person name="Kerlavage A.R."/>
            <person name="Graham D.E."/>
            <person name="Kyrpides N.C."/>
            <person name="Fleischmann R.D."/>
            <person name="Quackenbush J."/>
            <person name="Lee N.H."/>
            <person name="Sutton G.G."/>
            <person name="Gill S.R."/>
            <person name="Kirkness E.F."/>
            <person name="Dougherty B.A."/>
            <person name="McKenney K."/>
            <person name="Adams M.D."/>
            <person name="Loftus B.J."/>
            <person name="Peterson S.N."/>
            <person name="Reich C.I."/>
            <person name="McNeil L.K."/>
            <person name="Badger J.H."/>
            <person name="Glodek A."/>
            <person name="Zhou L."/>
            <person name="Overbeek R."/>
            <person name="Gocayne J.D."/>
            <person name="Weidman J.F."/>
            <person name="McDonald L.A."/>
            <person name="Utterback T.R."/>
            <person name="Cotton M.D."/>
            <person name="Spriggs T."/>
            <person name="Artiach P."/>
            <person name="Kaine B.P."/>
            <person name="Sykes S.M."/>
            <person name="Sadow P.W."/>
            <person name="D'Andrea K.P."/>
            <person name="Bowman C."/>
            <person name="Fujii C."/>
            <person name="Garland S.A."/>
            <person name="Mason T.M."/>
            <person name="Olsen G.J."/>
            <person name="Fraser C.M."/>
            <person name="Smith H.O."/>
            <person name="Woese C.R."/>
            <person name="Venter J.C."/>
        </authorList>
    </citation>
    <scope>NUCLEOTIDE SEQUENCE [LARGE SCALE GENOMIC DNA]</scope>
    <source>
        <strain>ATCC 49558 / DSM 4304 / JCM 9628 / NBRC 100126 / VC-16</strain>
    </source>
</reference>
<feature type="chain" id="PRO_0000135248" description="Putative uroporphyrinogen-III synthase">
    <location>
        <begin position="1"/>
        <end position="226"/>
    </location>
</feature>
<gene>
    <name type="ordered locus">AF_0116</name>
</gene>
<comment type="function">
    <text evidence="1">Catalyzes cyclization of the linear tetrapyrrole, hydroxymethylbilane, to the macrocyclic uroporphyrinogen III.</text>
</comment>
<comment type="catalytic activity">
    <reaction>
        <text>hydroxymethylbilane = uroporphyrinogen III + H2O</text>
        <dbReference type="Rhea" id="RHEA:18965"/>
        <dbReference type="ChEBI" id="CHEBI:15377"/>
        <dbReference type="ChEBI" id="CHEBI:57308"/>
        <dbReference type="ChEBI" id="CHEBI:57845"/>
        <dbReference type="EC" id="4.2.1.75"/>
    </reaction>
</comment>
<comment type="pathway">
    <text>Porphyrin-containing compound metabolism; protoporphyrin-IX biosynthesis; coproporphyrinogen-III from 5-aminolevulinate: step 3/4.</text>
</comment>
<comment type="similarity">
    <text evidence="2">Belongs to the uroporphyrinogen-III synthase family.</text>
</comment>
<evidence type="ECO:0000250" key="1"/>
<evidence type="ECO:0000305" key="2"/>
<accession>O30120</accession>
<keyword id="KW-0456">Lyase</keyword>
<keyword id="KW-0627">Porphyrin biosynthesis</keyword>
<keyword id="KW-1185">Reference proteome</keyword>
<name>HEM4_ARCFU</name>
<sequence length="226" mass="25856">MKVLILRPAELLSETIRRFREEGFDAYGCPFIKLIYTDFDVPEHDFAIVTSQNAARVLRERGVRLKRVIAIGKKTAELIEAEEVLLPSKFDSETLYEEFAEMLRGKRVVAFRSNAGSEAVKRLSEVADFREIQVYRIEKLQGEEQRREVEKVREGFYDAIVFSSSMIARSLLELCDEKCLEALKNIFVVAIGPPTAKVLAEKGIRAEIPEEYTFDGVIELLKSKKM</sequence>
<organism>
    <name type="scientific">Archaeoglobus fulgidus (strain ATCC 49558 / DSM 4304 / JCM 9628 / NBRC 100126 / VC-16)</name>
    <dbReference type="NCBI Taxonomy" id="224325"/>
    <lineage>
        <taxon>Archaea</taxon>
        <taxon>Methanobacteriati</taxon>
        <taxon>Methanobacteriota</taxon>
        <taxon>Archaeoglobi</taxon>
        <taxon>Archaeoglobales</taxon>
        <taxon>Archaeoglobaceae</taxon>
        <taxon>Archaeoglobus</taxon>
    </lineage>
</organism>
<dbReference type="EC" id="4.2.1.75"/>
<dbReference type="EMBL" id="AE000782">
    <property type="protein sequence ID" value="AAB91112.1"/>
    <property type="molecule type" value="Genomic_DNA"/>
</dbReference>
<dbReference type="PIR" id="D69264">
    <property type="entry name" value="D69264"/>
</dbReference>
<dbReference type="RefSeq" id="WP_010877630.1">
    <property type="nucleotide sequence ID" value="NC_000917.1"/>
</dbReference>
<dbReference type="SMR" id="O30120"/>
<dbReference type="STRING" id="224325.AF_0116"/>
<dbReference type="PaxDb" id="224325-AF_0116"/>
<dbReference type="EnsemblBacteria" id="AAB91112">
    <property type="protein sequence ID" value="AAB91112"/>
    <property type="gene ID" value="AF_0116"/>
</dbReference>
<dbReference type="KEGG" id="afu:AF_0116"/>
<dbReference type="eggNOG" id="arCOG02048">
    <property type="taxonomic scope" value="Archaea"/>
</dbReference>
<dbReference type="HOGENOM" id="CLU_011276_9_5_2"/>
<dbReference type="OrthoDB" id="15395at2157"/>
<dbReference type="PhylomeDB" id="O30120"/>
<dbReference type="UniPathway" id="UPA00251">
    <property type="reaction ID" value="UER00320"/>
</dbReference>
<dbReference type="Proteomes" id="UP000002199">
    <property type="component" value="Chromosome"/>
</dbReference>
<dbReference type="GO" id="GO:0004852">
    <property type="term" value="F:uroporphyrinogen-III synthase activity"/>
    <property type="evidence" value="ECO:0007669"/>
    <property type="project" value="UniProtKB-EC"/>
</dbReference>
<dbReference type="GO" id="GO:0006782">
    <property type="term" value="P:protoporphyrinogen IX biosynthetic process"/>
    <property type="evidence" value="ECO:0007669"/>
    <property type="project" value="UniProtKB-UniPathway"/>
</dbReference>
<dbReference type="GO" id="GO:0006780">
    <property type="term" value="P:uroporphyrinogen III biosynthetic process"/>
    <property type="evidence" value="ECO:0007669"/>
    <property type="project" value="InterPro"/>
</dbReference>
<dbReference type="CDD" id="cd06578">
    <property type="entry name" value="HemD"/>
    <property type="match status" value="1"/>
</dbReference>
<dbReference type="Gene3D" id="3.40.50.10090">
    <property type="match status" value="2"/>
</dbReference>
<dbReference type="InterPro" id="IPR036108">
    <property type="entry name" value="4pyrrol_syn_uPrphyn_synt_sf"/>
</dbReference>
<dbReference type="InterPro" id="IPR003754">
    <property type="entry name" value="4pyrrol_synth_uPrphyn_synth"/>
</dbReference>
<dbReference type="InterPro" id="IPR039793">
    <property type="entry name" value="UROS/Hem4"/>
</dbReference>
<dbReference type="PANTHER" id="PTHR40082">
    <property type="entry name" value="BLR5956 PROTEIN"/>
    <property type="match status" value="1"/>
</dbReference>
<dbReference type="PANTHER" id="PTHR40082:SF1">
    <property type="entry name" value="BLR5956 PROTEIN"/>
    <property type="match status" value="1"/>
</dbReference>
<dbReference type="Pfam" id="PF02602">
    <property type="entry name" value="HEM4"/>
    <property type="match status" value="1"/>
</dbReference>
<dbReference type="SUPFAM" id="SSF69618">
    <property type="entry name" value="HemD-like"/>
    <property type="match status" value="1"/>
</dbReference>
<proteinExistence type="inferred from homology"/>